<dbReference type="EMBL" id="BA000039">
    <property type="protein sequence ID" value="BAC10013.1"/>
    <property type="status" value="ALT_INIT"/>
    <property type="molecule type" value="Genomic_DNA"/>
</dbReference>
<dbReference type="RefSeq" id="NP_683251.2">
    <property type="nucleotide sequence ID" value="NC_004113.1"/>
</dbReference>
<dbReference type="RefSeq" id="WP_011058293.1">
    <property type="nucleotide sequence ID" value="NC_004113.1"/>
</dbReference>
<dbReference type="SMR" id="Q8DG62"/>
<dbReference type="STRING" id="197221.gene:10749083"/>
<dbReference type="EnsemblBacteria" id="BAC10013">
    <property type="protein sequence ID" value="BAC10013"/>
    <property type="gene ID" value="BAC10013"/>
</dbReference>
<dbReference type="KEGG" id="tel:tlr2462"/>
<dbReference type="PATRIC" id="fig|197221.4.peg.2586"/>
<dbReference type="eggNOG" id="COG0227">
    <property type="taxonomic scope" value="Bacteria"/>
</dbReference>
<dbReference type="Proteomes" id="UP000000440">
    <property type="component" value="Chromosome"/>
</dbReference>
<dbReference type="GO" id="GO:1990904">
    <property type="term" value="C:ribonucleoprotein complex"/>
    <property type="evidence" value="ECO:0007669"/>
    <property type="project" value="UniProtKB-KW"/>
</dbReference>
<dbReference type="GO" id="GO:0005840">
    <property type="term" value="C:ribosome"/>
    <property type="evidence" value="ECO:0007669"/>
    <property type="project" value="UniProtKB-KW"/>
</dbReference>
<dbReference type="GO" id="GO:0003735">
    <property type="term" value="F:structural constituent of ribosome"/>
    <property type="evidence" value="ECO:0007669"/>
    <property type="project" value="InterPro"/>
</dbReference>
<dbReference type="GO" id="GO:0006412">
    <property type="term" value="P:translation"/>
    <property type="evidence" value="ECO:0007669"/>
    <property type="project" value="UniProtKB-UniRule"/>
</dbReference>
<dbReference type="Gene3D" id="2.30.170.40">
    <property type="entry name" value="Ribosomal protein L28/L24"/>
    <property type="match status" value="1"/>
</dbReference>
<dbReference type="HAMAP" id="MF_00373">
    <property type="entry name" value="Ribosomal_bL28"/>
    <property type="match status" value="1"/>
</dbReference>
<dbReference type="InterPro" id="IPR026569">
    <property type="entry name" value="Ribosomal_bL28"/>
</dbReference>
<dbReference type="InterPro" id="IPR034704">
    <property type="entry name" value="Ribosomal_bL28/bL31-like_sf"/>
</dbReference>
<dbReference type="InterPro" id="IPR001383">
    <property type="entry name" value="Ribosomal_bL28_bact-type"/>
</dbReference>
<dbReference type="InterPro" id="IPR037147">
    <property type="entry name" value="Ribosomal_bL28_sf"/>
</dbReference>
<dbReference type="NCBIfam" id="TIGR00009">
    <property type="entry name" value="L28"/>
    <property type="match status" value="1"/>
</dbReference>
<dbReference type="PANTHER" id="PTHR13528">
    <property type="entry name" value="39S RIBOSOMAL PROTEIN L28, MITOCHONDRIAL"/>
    <property type="match status" value="1"/>
</dbReference>
<dbReference type="PANTHER" id="PTHR13528:SF2">
    <property type="entry name" value="LARGE RIBOSOMAL SUBUNIT PROTEIN BL28M"/>
    <property type="match status" value="1"/>
</dbReference>
<dbReference type="Pfam" id="PF00830">
    <property type="entry name" value="Ribosomal_L28"/>
    <property type="match status" value="1"/>
</dbReference>
<dbReference type="SUPFAM" id="SSF143800">
    <property type="entry name" value="L28p-like"/>
    <property type="match status" value="1"/>
</dbReference>
<reference key="1">
    <citation type="journal article" date="2002" name="DNA Res.">
        <title>Complete genome structure of the thermophilic cyanobacterium Thermosynechococcus elongatus BP-1.</title>
        <authorList>
            <person name="Nakamura Y."/>
            <person name="Kaneko T."/>
            <person name="Sato S."/>
            <person name="Ikeuchi M."/>
            <person name="Katoh H."/>
            <person name="Sasamoto S."/>
            <person name="Watanabe A."/>
            <person name="Iriguchi M."/>
            <person name="Kawashima K."/>
            <person name="Kimura T."/>
            <person name="Kishida Y."/>
            <person name="Kiyokawa C."/>
            <person name="Kohara M."/>
            <person name="Matsumoto M."/>
            <person name="Matsuno A."/>
            <person name="Nakazaki N."/>
            <person name="Shimpo S."/>
            <person name="Sugimoto M."/>
            <person name="Takeuchi C."/>
            <person name="Yamada M."/>
            <person name="Tabata S."/>
        </authorList>
    </citation>
    <scope>NUCLEOTIDE SEQUENCE [LARGE SCALE GENOMIC DNA]</scope>
    <source>
        <strain>NIES-2133 / IAM M-273 / BP-1</strain>
    </source>
</reference>
<protein>
    <recommendedName>
        <fullName evidence="1">Large ribosomal subunit protein bL28</fullName>
    </recommendedName>
    <alternativeName>
        <fullName evidence="2">50S ribosomal protein L28</fullName>
    </alternativeName>
</protein>
<comment type="similarity">
    <text evidence="1">Belongs to the bacterial ribosomal protein bL28 family.</text>
</comment>
<comment type="sequence caution" evidence="2">
    <conflict type="erroneous initiation">
        <sequence resource="EMBL-CDS" id="BAC10013"/>
    </conflict>
</comment>
<keyword id="KW-1185">Reference proteome</keyword>
<keyword id="KW-0687">Ribonucleoprotein</keyword>
<keyword id="KW-0689">Ribosomal protein</keyword>
<gene>
    <name evidence="1" type="primary">rpmB</name>
    <name evidence="1" type="synonym">rpl28</name>
    <name type="ordered locus">tlr2462</name>
</gene>
<evidence type="ECO:0000255" key="1">
    <source>
        <dbReference type="HAMAP-Rule" id="MF_00373"/>
    </source>
</evidence>
<evidence type="ECO:0000305" key="2"/>
<accession>Q8DG62</accession>
<name>RL28_THEVB</name>
<organism>
    <name type="scientific">Thermosynechococcus vestitus (strain NIES-2133 / IAM M-273 / BP-1)</name>
    <dbReference type="NCBI Taxonomy" id="197221"/>
    <lineage>
        <taxon>Bacteria</taxon>
        <taxon>Bacillati</taxon>
        <taxon>Cyanobacteriota</taxon>
        <taxon>Cyanophyceae</taxon>
        <taxon>Acaryochloridales</taxon>
        <taxon>Thermosynechococcaceae</taxon>
        <taxon>Thermosynechococcus</taxon>
    </lineage>
</organism>
<feature type="chain" id="PRO_0000178572" description="Large ribosomal subunit protein bL28">
    <location>
        <begin position="1"/>
        <end position="78"/>
    </location>
</feature>
<proteinExistence type="inferred from homology"/>
<sequence length="78" mass="9130">MSRVCQLTGKKANNAYAISHSHRRTKKLQQVNLQWKRVWWPEGKRWVRLRLSTKAIKTLERKGLSAFAKEAGLDLNKL</sequence>